<sequence length="221" mass="23878">MASKSFLSLLVALFVAICFVLSPGVDAAKGPVITNKVYFDIEHGGKPLGRIVMGLYGKTVPKTAENFRALATGKNSDGEDLGYGYEGSSFHRIIKNFMIQGGDFTKGDGTGGKSIYGSKFPDENFKLKHTGPGVLSMANAGRDTNGSQFFICTVKTAWLDNRHVVFGHVLEGMDVVYAMENVKTSRGDKPVEPITIAASGELPIEHEVDEQGNQVPFRIEL</sequence>
<proteinExistence type="inferred from homology"/>
<dbReference type="EC" id="5.2.1.8"/>
<dbReference type="EMBL" id="AE017347">
    <property type="protein sequence ID" value="AAW44558.2"/>
    <property type="molecule type" value="Genomic_DNA"/>
</dbReference>
<dbReference type="RefSeq" id="XP_571865.1">
    <property type="nucleotide sequence ID" value="XM_571865.1"/>
</dbReference>
<dbReference type="SMR" id="P0CP78"/>
<dbReference type="FunCoup" id="P0CP78">
    <property type="interactions" value="165"/>
</dbReference>
<dbReference type="IntAct" id="P0CP78">
    <property type="interactions" value="3"/>
</dbReference>
<dbReference type="MINT" id="P0CP78"/>
<dbReference type="STRING" id="214684.P0CP78"/>
<dbReference type="GlyCosmos" id="P0CP78">
    <property type="glycosylation" value="1 site, No reported glycans"/>
</dbReference>
<dbReference type="PaxDb" id="214684-P0CP78"/>
<dbReference type="EnsemblFungi" id="AAW44558">
    <property type="protein sequence ID" value="AAW44558"/>
    <property type="gene ID" value="CNG01060"/>
</dbReference>
<dbReference type="GeneID" id="3258790"/>
<dbReference type="eggNOG" id="KOG0880">
    <property type="taxonomic scope" value="Eukaryota"/>
</dbReference>
<dbReference type="HOGENOM" id="CLU_012062_4_2_1"/>
<dbReference type="InParanoid" id="P0CP78"/>
<dbReference type="OrthoDB" id="193499at2759"/>
<dbReference type="Proteomes" id="UP000002149">
    <property type="component" value="Chromosome 7"/>
</dbReference>
<dbReference type="GO" id="GO:0005737">
    <property type="term" value="C:cytoplasm"/>
    <property type="evidence" value="ECO:0000318"/>
    <property type="project" value="GO_Central"/>
</dbReference>
<dbReference type="GO" id="GO:0005783">
    <property type="term" value="C:endoplasmic reticulum"/>
    <property type="evidence" value="ECO:0000318"/>
    <property type="project" value="GO_Central"/>
</dbReference>
<dbReference type="GO" id="GO:0005788">
    <property type="term" value="C:endoplasmic reticulum lumen"/>
    <property type="evidence" value="ECO:0007669"/>
    <property type="project" value="UniProtKB-SubCell"/>
</dbReference>
<dbReference type="GO" id="GO:0016018">
    <property type="term" value="F:cyclosporin A binding"/>
    <property type="evidence" value="ECO:0000318"/>
    <property type="project" value="GO_Central"/>
</dbReference>
<dbReference type="GO" id="GO:0003755">
    <property type="term" value="F:peptidyl-prolyl cis-trans isomerase activity"/>
    <property type="evidence" value="ECO:0000318"/>
    <property type="project" value="GO_Central"/>
</dbReference>
<dbReference type="GO" id="GO:0006457">
    <property type="term" value="P:protein folding"/>
    <property type="evidence" value="ECO:0000318"/>
    <property type="project" value="GO_Central"/>
</dbReference>
<dbReference type="CDD" id="cd01926">
    <property type="entry name" value="cyclophilin_ABH_like"/>
    <property type="match status" value="1"/>
</dbReference>
<dbReference type="FunFam" id="2.40.100.10:FF:000001">
    <property type="entry name" value="Peptidyl-prolyl cis-trans isomerase"/>
    <property type="match status" value="1"/>
</dbReference>
<dbReference type="Gene3D" id="2.40.100.10">
    <property type="entry name" value="Cyclophilin-like"/>
    <property type="match status" value="1"/>
</dbReference>
<dbReference type="InterPro" id="IPR029000">
    <property type="entry name" value="Cyclophilin-like_dom_sf"/>
</dbReference>
<dbReference type="InterPro" id="IPR020892">
    <property type="entry name" value="Cyclophilin-type_PPIase_CS"/>
</dbReference>
<dbReference type="InterPro" id="IPR002130">
    <property type="entry name" value="Cyclophilin-type_PPIase_dom"/>
</dbReference>
<dbReference type="PANTHER" id="PTHR11071">
    <property type="entry name" value="PEPTIDYL-PROLYL CIS-TRANS ISOMERASE"/>
    <property type="match status" value="1"/>
</dbReference>
<dbReference type="PANTHER" id="PTHR11071:SF561">
    <property type="entry name" value="PEPTIDYL-PROLYL CIS-TRANS ISOMERASE D-RELATED"/>
    <property type="match status" value="1"/>
</dbReference>
<dbReference type="Pfam" id="PF00160">
    <property type="entry name" value="Pro_isomerase"/>
    <property type="match status" value="1"/>
</dbReference>
<dbReference type="PRINTS" id="PR00153">
    <property type="entry name" value="CSAPPISMRASE"/>
</dbReference>
<dbReference type="SUPFAM" id="SSF50891">
    <property type="entry name" value="Cyclophilin-like"/>
    <property type="match status" value="1"/>
</dbReference>
<dbReference type="PROSITE" id="PS00170">
    <property type="entry name" value="CSA_PPIASE_1"/>
    <property type="match status" value="1"/>
</dbReference>
<dbReference type="PROSITE" id="PS50072">
    <property type="entry name" value="CSA_PPIASE_2"/>
    <property type="match status" value="1"/>
</dbReference>
<evidence type="ECO:0000250" key="1"/>
<evidence type="ECO:0000255" key="2"/>
<evidence type="ECO:0000255" key="3">
    <source>
        <dbReference type="PROSITE-ProRule" id="PRU00156"/>
    </source>
</evidence>
<evidence type="ECO:0000305" key="4"/>
<protein>
    <recommendedName>
        <fullName>Peptidyl-prolyl cis-trans isomerase B</fullName>
        <shortName>PPIase B</shortName>
        <ecNumber>5.2.1.8</ecNumber>
    </recommendedName>
    <alternativeName>
        <fullName>Rotamase B</fullName>
    </alternativeName>
</protein>
<keyword id="KW-0256">Endoplasmic reticulum</keyword>
<keyword id="KW-0325">Glycoprotein</keyword>
<keyword id="KW-0413">Isomerase</keyword>
<keyword id="KW-1185">Reference proteome</keyword>
<keyword id="KW-0697">Rotamase</keyword>
<keyword id="KW-0732">Signal</keyword>
<accession>P0CP78</accession>
<accession>Q55P39</accession>
<accession>Q5KEB7</accession>
<reference key="1">
    <citation type="journal article" date="2005" name="Science">
        <title>The genome of the basidiomycetous yeast and human pathogen Cryptococcus neoformans.</title>
        <authorList>
            <person name="Loftus B.J."/>
            <person name="Fung E."/>
            <person name="Roncaglia P."/>
            <person name="Rowley D."/>
            <person name="Amedeo P."/>
            <person name="Bruno D."/>
            <person name="Vamathevan J."/>
            <person name="Miranda M."/>
            <person name="Anderson I.J."/>
            <person name="Fraser J.A."/>
            <person name="Allen J.E."/>
            <person name="Bosdet I.E."/>
            <person name="Brent M.R."/>
            <person name="Chiu R."/>
            <person name="Doering T.L."/>
            <person name="Donlin M.J."/>
            <person name="D'Souza C.A."/>
            <person name="Fox D.S."/>
            <person name="Grinberg V."/>
            <person name="Fu J."/>
            <person name="Fukushima M."/>
            <person name="Haas B.J."/>
            <person name="Huang J.C."/>
            <person name="Janbon G."/>
            <person name="Jones S.J.M."/>
            <person name="Koo H.L."/>
            <person name="Krzywinski M.I."/>
            <person name="Kwon-Chung K.J."/>
            <person name="Lengeler K.B."/>
            <person name="Maiti R."/>
            <person name="Marra M.A."/>
            <person name="Marra R.E."/>
            <person name="Mathewson C.A."/>
            <person name="Mitchell T.G."/>
            <person name="Pertea M."/>
            <person name="Riggs F.R."/>
            <person name="Salzberg S.L."/>
            <person name="Schein J.E."/>
            <person name="Shvartsbeyn A."/>
            <person name="Shin H."/>
            <person name="Shumway M."/>
            <person name="Specht C.A."/>
            <person name="Suh B.B."/>
            <person name="Tenney A."/>
            <person name="Utterback T.R."/>
            <person name="Wickes B.L."/>
            <person name="Wortman J.R."/>
            <person name="Wye N.H."/>
            <person name="Kronstad J.W."/>
            <person name="Lodge J.K."/>
            <person name="Heitman J."/>
            <person name="Davis R.W."/>
            <person name="Fraser C.M."/>
            <person name="Hyman R.W."/>
        </authorList>
    </citation>
    <scope>NUCLEOTIDE SEQUENCE [LARGE SCALE GENOMIC DNA]</scope>
    <source>
        <strain>JEC21 / ATCC MYA-565</strain>
    </source>
</reference>
<organism>
    <name type="scientific">Cryptococcus neoformans var. neoformans serotype D (strain JEC21 / ATCC MYA-565)</name>
    <name type="common">Filobasidiella neoformans</name>
    <dbReference type="NCBI Taxonomy" id="214684"/>
    <lineage>
        <taxon>Eukaryota</taxon>
        <taxon>Fungi</taxon>
        <taxon>Dikarya</taxon>
        <taxon>Basidiomycota</taxon>
        <taxon>Agaricomycotina</taxon>
        <taxon>Tremellomycetes</taxon>
        <taxon>Tremellales</taxon>
        <taxon>Cryptococcaceae</taxon>
        <taxon>Cryptococcus</taxon>
        <taxon>Cryptococcus neoformans species complex</taxon>
    </lineage>
</organism>
<name>PPIB_CRYNJ</name>
<comment type="function">
    <text evidence="1">PPIases accelerate the folding of proteins. It catalyzes the cis-trans isomerization of proline imidic peptide bonds in oligopeptides (By similarity).</text>
</comment>
<comment type="catalytic activity">
    <reaction>
        <text>[protein]-peptidylproline (omega=180) = [protein]-peptidylproline (omega=0)</text>
        <dbReference type="Rhea" id="RHEA:16237"/>
        <dbReference type="Rhea" id="RHEA-COMP:10747"/>
        <dbReference type="Rhea" id="RHEA-COMP:10748"/>
        <dbReference type="ChEBI" id="CHEBI:83833"/>
        <dbReference type="ChEBI" id="CHEBI:83834"/>
        <dbReference type="EC" id="5.2.1.8"/>
    </reaction>
</comment>
<comment type="activity regulation">
    <text evidence="1">Inhibited by cyclosporin A (CsA).</text>
</comment>
<comment type="subcellular location">
    <subcellularLocation>
        <location evidence="1">Endoplasmic reticulum lumen</location>
    </subcellularLocation>
</comment>
<comment type="similarity">
    <text evidence="4">Belongs to the cyclophilin-type PPIase family. PPIase B subfamily.</text>
</comment>
<feature type="signal peptide" evidence="2">
    <location>
        <begin position="1"/>
        <end position="27"/>
    </location>
</feature>
<feature type="chain" id="PRO_0000233046" description="Peptidyl-prolyl cis-trans isomerase B">
    <location>
        <begin position="28"/>
        <end position="221"/>
    </location>
</feature>
<feature type="domain" description="PPIase cyclophilin-type" evidence="3">
    <location>
        <begin position="38"/>
        <end position="201"/>
    </location>
</feature>
<feature type="short sequence motif" description="Prevents secretion from ER">
    <location>
        <begin position="218"/>
        <end position="221"/>
    </location>
</feature>
<feature type="glycosylation site" description="N-linked (GlcNAc...) asparagine" evidence="2">
    <location>
        <position position="145"/>
    </location>
</feature>
<gene>
    <name type="primary">CPR2</name>
    <name type="ordered locus">CNG01060</name>
</gene>